<name>NIFK_NOSS1</name>
<proteinExistence type="inferred from homology"/>
<accession>P00468</accession>
<sequence length="512" mass="57545">MPQNPERTVDHVDLFKQPEYTELFENKRKNFEGAHPPEEVERVSEWTKSWDYREKNFAREALTVNPAKGCQPVGAMFAALGFEGTLPFVQGSQGCVAYFRTHLSRHYKEPCSAVSSSMTEDAAVFGGLNNMIEGMQVSYQLYKPKMIAVCTTCMAEVIGDDLGAFITNSKNAGSIPQDFPVPFAHTPSFVGSHITGYDNMMKGILSNLTEGKKKATSNGKINFIPGFDTYVGNNRELKRMMGVMGVDYTILSDSSDYFDSPNMGEYEMYPGGTKLEDAADSINAKATVALQAYTTPKTREYIKTQWKQETQVLRPFGVKGTDEFLTAVSELTGKAIPEELEIERGRLVDAITDSYAWIHGKKFAIYGDPDLIISITSFLLEMGAEPVHILCNNGDDTFKKEMEAILAASPFGKEAKVWIQKDLWHFRSLLFTEPVDFFIGNSYGKYLWRDTSIPMVRIGYPLFDRHHLHRYSTLGYQGGLNILNWVVNTLLDEMDRSTNITGKTDISFDLIR</sequence>
<comment type="function">
    <text>This molybdenum-iron protein is part of the nitrogenase complex that catalyzes the key enzymatic reactions in nitrogen fixation.</text>
</comment>
<comment type="catalytic activity">
    <reaction>
        <text>N2 + 8 reduced [2Fe-2S]-[ferredoxin] + 16 ATP + 16 H2O = H2 + 8 oxidized [2Fe-2S]-[ferredoxin] + 2 NH4(+) + 16 ADP + 16 phosphate + 6 H(+)</text>
        <dbReference type="Rhea" id="RHEA:21448"/>
        <dbReference type="Rhea" id="RHEA-COMP:10000"/>
        <dbReference type="Rhea" id="RHEA-COMP:10001"/>
        <dbReference type="ChEBI" id="CHEBI:15377"/>
        <dbReference type="ChEBI" id="CHEBI:15378"/>
        <dbReference type="ChEBI" id="CHEBI:17997"/>
        <dbReference type="ChEBI" id="CHEBI:18276"/>
        <dbReference type="ChEBI" id="CHEBI:28938"/>
        <dbReference type="ChEBI" id="CHEBI:30616"/>
        <dbReference type="ChEBI" id="CHEBI:33737"/>
        <dbReference type="ChEBI" id="CHEBI:33738"/>
        <dbReference type="ChEBI" id="CHEBI:43474"/>
        <dbReference type="ChEBI" id="CHEBI:456216"/>
        <dbReference type="EC" id="1.18.6.1"/>
    </reaction>
</comment>
<comment type="cofactor">
    <cofactor evidence="1">
        <name>[8Fe-7S] cluster</name>
        <dbReference type="ChEBI" id="CHEBI:21143"/>
    </cofactor>
    <text evidence="1">Binds 1 [8Fe-7S] cluster per heterodimer.</text>
</comment>
<comment type="subunit">
    <text>Tetramer of two alpha and two beta chains. Forms complex with the iron protein (nitrogenase component 2).</text>
</comment>
<comment type="similarity">
    <text evidence="2">Belongs to the NifD/NifK/NifE/NifN family.</text>
</comment>
<reference key="1">
    <citation type="journal article" date="1982" name="Proc. Natl. Acad. Sci. U.S.A.">
        <title>Sequence of the gene coding for the beta-subunit of dinitrogenase from the blue-green alga Anabaena.</title>
        <authorList>
            <person name="Mazur B.J."/>
            <person name="Chui C.-F."/>
        </authorList>
    </citation>
    <scope>NUCLEOTIDE SEQUENCE [GENOMIC DNA]</scope>
</reference>
<reference key="2">
    <citation type="journal article" date="2001" name="DNA Res.">
        <title>Complete genomic sequence of the filamentous nitrogen-fixing cyanobacterium Anabaena sp. strain PCC 7120.</title>
        <authorList>
            <person name="Kaneko T."/>
            <person name="Nakamura Y."/>
            <person name="Wolk C.P."/>
            <person name="Kuritz T."/>
            <person name="Sasamoto S."/>
            <person name="Watanabe A."/>
            <person name="Iriguchi M."/>
            <person name="Ishikawa A."/>
            <person name="Kawashima K."/>
            <person name="Kimura T."/>
            <person name="Kishida Y."/>
            <person name="Kohara M."/>
            <person name="Matsumoto M."/>
            <person name="Matsuno A."/>
            <person name="Muraki A."/>
            <person name="Nakazaki N."/>
            <person name="Shimpo S."/>
            <person name="Sugimoto M."/>
            <person name="Takazawa M."/>
            <person name="Yamada M."/>
            <person name="Yasuda M."/>
            <person name="Tabata S."/>
        </authorList>
    </citation>
    <scope>NUCLEOTIDE SEQUENCE [LARGE SCALE GENOMIC DNA]</scope>
    <source>
        <strain>PCC 7120 / SAG 25.82 / UTEX 2576</strain>
    </source>
</reference>
<feature type="chain" id="PRO_0000153085" description="Nitrogenase molybdenum-iron protein beta chain">
    <location>
        <begin position="1"/>
        <end position="512"/>
    </location>
</feature>
<feature type="binding site" evidence="1">
    <location>
        <position position="70"/>
    </location>
    <ligand>
        <name>[8Fe-7S] cluster</name>
        <dbReference type="ChEBI" id="CHEBI:21143"/>
        <note>ligand shared with alpha chain</note>
    </ligand>
</feature>
<feature type="binding site" evidence="1">
    <location>
        <position position="95"/>
    </location>
    <ligand>
        <name>[8Fe-7S] cluster</name>
        <dbReference type="ChEBI" id="CHEBI:21143"/>
        <note>ligand shared with alpha chain</note>
    </ligand>
</feature>
<feature type="binding site" evidence="1">
    <location>
        <position position="153"/>
    </location>
    <ligand>
        <name>[8Fe-7S] cluster</name>
        <dbReference type="ChEBI" id="CHEBI:21143"/>
        <note>ligand shared with alpha chain</note>
    </ligand>
</feature>
<feature type="binding site" evidence="1">
    <location>
        <position position="188"/>
    </location>
    <ligand>
        <name>[8Fe-7S] cluster</name>
        <dbReference type="ChEBI" id="CHEBI:21143"/>
        <note>ligand shared with alpha chain</note>
    </ligand>
</feature>
<feature type="sequence conflict" description="In Ref. 1." evidence="2" ref="1">
    <original>G</original>
    <variation>S</variation>
    <location>
        <position position="271"/>
    </location>
</feature>
<dbReference type="EC" id="1.18.6.1"/>
<dbReference type="EMBL" id="J01539">
    <property type="status" value="NOT_ANNOTATED_CDS"/>
    <property type="molecule type" value="Genomic_DNA"/>
</dbReference>
<dbReference type="EMBL" id="BA000019">
    <property type="protein sequence ID" value="BAB73397.1"/>
    <property type="molecule type" value="Genomic_DNA"/>
</dbReference>
<dbReference type="PIR" id="A00546">
    <property type="entry name" value="NIAIMB"/>
</dbReference>
<dbReference type="PIR" id="AE1986">
    <property type="entry name" value="AE1986"/>
</dbReference>
<dbReference type="RefSeq" id="WP_010995612.1">
    <property type="nucleotide sequence ID" value="NZ_RSCN01000040.1"/>
</dbReference>
<dbReference type="SMR" id="P00468"/>
<dbReference type="STRING" id="103690.gene:10493455"/>
<dbReference type="KEGG" id="ana:all1440"/>
<dbReference type="eggNOG" id="COG2710">
    <property type="taxonomic scope" value="Bacteria"/>
</dbReference>
<dbReference type="OrthoDB" id="9800746at2"/>
<dbReference type="Proteomes" id="UP000002483">
    <property type="component" value="Chromosome"/>
</dbReference>
<dbReference type="GO" id="GO:0016612">
    <property type="term" value="C:molybdenum-iron nitrogenase complex"/>
    <property type="evidence" value="ECO:0007669"/>
    <property type="project" value="InterPro"/>
</dbReference>
<dbReference type="GO" id="GO:0005524">
    <property type="term" value="F:ATP binding"/>
    <property type="evidence" value="ECO:0007669"/>
    <property type="project" value="UniProtKB-KW"/>
</dbReference>
<dbReference type="GO" id="GO:0051536">
    <property type="term" value="F:iron-sulfur cluster binding"/>
    <property type="evidence" value="ECO:0007669"/>
    <property type="project" value="UniProtKB-KW"/>
</dbReference>
<dbReference type="GO" id="GO:0046872">
    <property type="term" value="F:metal ion binding"/>
    <property type="evidence" value="ECO:0007669"/>
    <property type="project" value="UniProtKB-KW"/>
</dbReference>
<dbReference type="GO" id="GO:0016163">
    <property type="term" value="F:nitrogenase activity"/>
    <property type="evidence" value="ECO:0007669"/>
    <property type="project" value="UniProtKB-EC"/>
</dbReference>
<dbReference type="GO" id="GO:0009399">
    <property type="term" value="P:nitrogen fixation"/>
    <property type="evidence" value="ECO:0007669"/>
    <property type="project" value="UniProtKB-KW"/>
</dbReference>
<dbReference type="CDD" id="cd01974">
    <property type="entry name" value="Nitrogenase_MoFe_beta"/>
    <property type="match status" value="1"/>
</dbReference>
<dbReference type="Gene3D" id="3.40.50.1980">
    <property type="entry name" value="Nitrogenase molybdenum iron protein domain"/>
    <property type="match status" value="3"/>
</dbReference>
<dbReference type="Gene3D" id="1.20.89.10">
    <property type="entry name" value="Nitrogenase Molybdenum-iron Protein, subunit B, domain 4"/>
    <property type="match status" value="1"/>
</dbReference>
<dbReference type="InterPro" id="IPR050152">
    <property type="entry name" value="ChlB/BchB/BchZ"/>
</dbReference>
<dbReference type="InterPro" id="IPR000510">
    <property type="entry name" value="Nase/OxRdtase_comp1"/>
</dbReference>
<dbReference type="InterPro" id="IPR000318">
    <property type="entry name" value="Nase_comp1_CS"/>
</dbReference>
<dbReference type="InterPro" id="IPR005976">
    <property type="entry name" value="Nase_Mo-Fe_CF_bsu"/>
</dbReference>
<dbReference type="InterPro" id="IPR024564">
    <property type="entry name" value="Nase_Mo-Fe_CF_bsu_N"/>
</dbReference>
<dbReference type="NCBIfam" id="TIGR01286">
    <property type="entry name" value="nifK"/>
    <property type="match status" value="1"/>
</dbReference>
<dbReference type="PANTHER" id="PTHR33712">
    <property type="entry name" value="LIGHT-INDEPENDENT PROTOCHLOROPHYLLIDE REDUCTASE SUBUNIT B"/>
    <property type="match status" value="1"/>
</dbReference>
<dbReference type="PANTHER" id="PTHR33712:SF7">
    <property type="entry name" value="LIGHT-INDEPENDENT PROTOCHLOROPHYLLIDE REDUCTASE SUBUNIT B"/>
    <property type="match status" value="1"/>
</dbReference>
<dbReference type="Pfam" id="PF11844">
    <property type="entry name" value="DUF3364"/>
    <property type="match status" value="1"/>
</dbReference>
<dbReference type="Pfam" id="PF00148">
    <property type="entry name" value="Oxidored_nitro"/>
    <property type="match status" value="1"/>
</dbReference>
<dbReference type="SUPFAM" id="SSF53807">
    <property type="entry name" value="Helical backbone' metal receptor"/>
    <property type="match status" value="1"/>
</dbReference>
<dbReference type="PROSITE" id="PS00090">
    <property type="entry name" value="NITROGENASE_1_2"/>
    <property type="match status" value="1"/>
</dbReference>
<organism>
    <name type="scientific">Nostoc sp. (strain PCC 7120 / SAG 25.82 / UTEX 2576)</name>
    <dbReference type="NCBI Taxonomy" id="103690"/>
    <lineage>
        <taxon>Bacteria</taxon>
        <taxon>Bacillati</taxon>
        <taxon>Cyanobacteriota</taxon>
        <taxon>Cyanophyceae</taxon>
        <taxon>Nostocales</taxon>
        <taxon>Nostocaceae</taxon>
        <taxon>Nostoc</taxon>
    </lineage>
</organism>
<evidence type="ECO:0000250" key="1"/>
<evidence type="ECO:0000305" key="2"/>
<protein>
    <recommendedName>
        <fullName>Nitrogenase molybdenum-iron protein beta chain</fullName>
        <ecNumber>1.18.6.1</ecNumber>
    </recommendedName>
    <alternativeName>
        <fullName>Dinitrogenase</fullName>
    </alternativeName>
    <alternativeName>
        <fullName>Nitrogenase component I</fullName>
    </alternativeName>
</protein>
<keyword id="KW-0067">ATP-binding</keyword>
<keyword id="KW-0408">Iron</keyword>
<keyword id="KW-0411">Iron-sulfur</keyword>
<keyword id="KW-0479">Metal-binding</keyword>
<keyword id="KW-0535">Nitrogen fixation</keyword>
<keyword id="KW-0547">Nucleotide-binding</keyword>
<keyword id="KW-0560">Oxidoreductase</keyword>
<keyword id="KW-1185">Reference proteome</keyword>
<gene>
    <name type="primary">nifK</name>
    <name type="ordered locus">all1440</name>
</gene>